<protein>
    <recommendedName>
        <fullName evidence="1">ATP synthase subunit c, chloroplastic</fullName>
    </recommendedName>
    <alternativeName>
        <fullName evidence="1">ATP synthase F(0) sector subunit c</fullName>
    </alternativeName>
    <alternativeName>
        <fullName evidence="1">ATPase subunit III</fullName>
    </alternativeName>
    <alternativeName>
        <fullName evidence="1">F-type ATPase subunit c</fullName>
        <shortName evidence="1">F-ATPase subunit c</shortName>
    </alternativeName>
    <alternativeName>
        <fullName evidence="1">Lipid-binding protein</fullName>
    </alternativeName>
</protein>
<keyword id="KW-0066">ATP synthesis</keyword>
<keyword id="KW-0138">CF(0)</keyword>
<keyword id="KW-0150">Chloroplast</keyword>
<keyword id="KW-0375">Hydrogen ion transport</keyword>
<keyword id="KW-0406">Ion transport</keyword>
<keyword id="KW-0446">Lipid-binding</keyword>
<keyword id="KW-0472">Membrane</keyword>
<keyword id="KW-0934">Plastid</keyword>
<keyword id="KW-0793">Thylakoid</keyword>
<keyword id="KW-0812">Transmembrane</keyword>
<keyword id="KW-1133">Transmembrane helix</keyword>
<keyword id="KW-0813">Transport</keyword>
<feature type="chain" id="PRO_0000112187" description="ATP synthase subunit c, chloroplastic">
    <location>
        <begin position="1"/>
        <end position="81"/>
    </location>
</feature>
<feature type="transmembrane region" description="Helical" evidence="1">
    <location>
        <begin position="3"/>
        <end position="23"/>
    </location>
</feature>
<feature type="transmembrane region" description="Helical" evidence="1">
    <location>
        <begin position="57"/>
        <end position="77"/>
    </location>
</feature>
<feature type="site" description="Reversibly protonated during proton transport" evidence="1">
    <location>
        <position position="61"/>
    </location>
</feature>
<name>ATPH_EUGGR</name>
<geneLocation type="chloroplast"/>
<evidence type="ECO:0000255" key="1">
    <source>
        <dbReference type="HAMAP-Rule" id="MF_01396"/>
    </source>
</evidence>
<proteinExistence type="inferred from homology"/>
<sequence>MNPIICAASVIGAGLAIGLGAIGPGIGQGTASGKAIEGLARQPEAEGKIRGTLLLSLAFMEALTIYGLVVALAIIFANPFV</sequence>
<reference key="1">
    <citation type="journal article" date="1993" name="Curr. Genet.">
        <title>A novel Euglena gracilis chloroplast operon encoding four ATP synthase subunits and two ribosomal proteins contains 17 introns.</title>
        <authorList>
            <person name="Drager R.G."/>
            <person name="Hallick R.B."/>
        </authorList>
    </citation>
    <scope>NUCLEOTIDE SEQUENCE [GENOMIC DNA]</scope>
    <source>
        <strain>Z / UTEX 753</strain>
    </source>
</reference>
<reference key="2">
    <citation type="journal article" date="1985" name="Plant Mol. Biol.">
        <title>Location, nucleotide sequence and expression of the proton-translocating subunit gene of the E. gracilis chloroplast ATP synthase.</title>
        <authorList>
            <person name="Passavant C.W."/>
            <person name="Hallick R.B."/>
        </authorList>
    </citation>
    <scope>PRELIMINARY NUCLEOTIDE SEQUENCE [GENOMIC DNA]</scope>
    <source>
        <strain>Z / UTEX 753</strain>
    </source>
</reference>
<reference key="3">
    <citation type="journal article" date="1993" name="Nucleic Acids Res.">
        <title>Complete sequence of Euglena gracilis chloroplast DNA.</title>
        <authorList>
            <person name="Hallick R.B."/>
            <person name="Hong L."/>
            <person name="Drager R.G."/>
            <person name="Favreau M.R."/>
            <person name="Monfort A."/>
            <person name="Orsat B."/>
            <person name="Spielmann A."/>
            <person name="Stutz E."/>
        </authorList>
    </citation>
    <scope>NUCLEOTIDE SEQUENCE [LARGE SCALE GENOMIC DNA]</scope>
    <source>
        <strain>Z / UTEX 753</strain>
    </source>
</reference>
<accession>P10603</accession>
<dbReference type="EMBL" id="Z11874">
    <property type="protein sequence ID" value="CAA77930.1"/>
    <property type="molecule type" value="Genomic_DNA"/>
</dbReference>
<dbReference type="EMBL" id="M16844">
    <property type="protein sequence ID" value="AAA84220.1"/>
    <property type="status" value="ALT_SEQ"/>
    <property type="molecule type" value="Genomic_DNA"/>
</dbReference>
<dbReference type="EMBL" id="X70810">
    <property type="protein sequence ID" value="CAA50113.1"/>
    <property type="molecule type" value="Genomic_DNA"/>
</dbReference>
<dbReference type="PIR" id="S07400">
    <property type="entry name" value="PWQFL"/>
</dbReference>
<dbReference type="PIR" id="S34901">
    <property type="entry name" value="LWEGC"/>
</dbReference>
<dbReference type="RefSeq" id="NP_041926.1">
    <property type="nucleotide sequence ID" value="NC_001603.2"/>
</dbReference>
<dbReference type="SMR" id="P10603"/>
<dbReference type="GeneID" id="807482"/>
<dbReference type="GO" id="GO:0009535">
    <property type="term" value="C:chloroplast thylakoid membrane"/>
    <property type="evidence" value="ECO:0007669"/>
    <property type="project" value="UniProtKB-SubCell"/>
</dbReference>
<dbReference type="GO" id="GO:0045259">
    <property type="term" value="C:proton-transporting ATP synthase complex"/>
    <property type="evidence" value="ECO:0007669"/>
    <property type="project" value="UniProtKB-KW"/>
</dbReference>
<dbReference type="GO" id="GO:0033177">
    <property type="term" value="C:proton-transporting two-sector ATPase complex, proton-transporting domain"/>
    <property type="evidence" value="ECO:0007669"/>
    <property type="project" value="InterPro"/>
</dbReference>
<dbReference type="GO" id="GO:0008289">
    <property type="term" value="F:lipid binding"/>
    <property type="evidence" value="ECO:0007669"/>
    <property type="project" value="UniProtKB-KW"/>
</dbReference>
<dbReference type="GO" id="GO:0046933">
    <property type="term" value="F:proton-transporting ATP synthase activity, rotational mechanism"/>
    <property type="evidence" value="ECO:0007669"/>
    <property type="project" value="UniProtKB-UniRule"/>
</dbReference>
<dbReference type="CDD" id="cd18183">
    <property type="entry name" value="ATP-synt_Fo_c_ATPH"/>
    <property type="match status" value="1"/>
</dbReference>
<dbReference type="FunFam" id="1.20.20.10:FF:000001">
    <property type="entry name" value="ATP synthase subunit c, chloroplastic"/>
    <property type="match status" value="1"/>
</dbReference>
<dbReference type="Gene3D" id="1.20.20.10">
    <property type="entry name" value="F1F0 ATP synthase subunit C"/>
    <property type="match status" value="1"/>
</dbReference>
<dbReference type="HAMAP" id="MF_01396">
    <property type="entry name" value="ATP_synth_c_bact"/>
    <property type="match status" value="1"/>
</dbReference>
<dbReference type="InterPro" id="IPR005953">
    <property type="entry name" value="ATP_synth_csu_bac/chlpt"/>
</dbReference>
<dbReference type="InterPro" id="IPR000454">
    <property type="entry name" value="ATP_synth_F0_csu"/>
</dbReference>
<dbReference type="InterPro" id="IPR020537">
    <property type="entry name" value="ATP_synth_F0_csu_DDCD_BS"/>
</dbReference>
<dbReference type="InterPro" id="IPR038662">
    <property type="entry name" value="ATP_synth_F0_csu_sf"/>
</dbReference>
<dbReference type="InterPro" id="IPR002379">
    <property type="entry name" value="ATPase_proteolipid_c-like_dom"/>
</dbReference>
<dbReference type="InterPro" id="IPR035921">
    <property type="entry name" value="F/V-ATP_Csub_sf"/>
</dbReference>
<dbReference type="NCBIfam" id="TIGR01260">
    <property type="entry name" value="ATP_synt_c"/>
    <property type="match status" value="1"/>
</dbReference>
<dbReference type="NCBIfam" id="NF005608">
    <property type="entry name" value="PRK07354.1"/>
    <property type="match status" value="1"/>
</dbReference>
<dbReference type="PANTHER" id="PTHR10031">
    <property type="entry name" value="ATP SYNTHASE LIPID-BINDING PROTEIN, MITOCHONDRIAL"/>
    <property type="match status" value="1"/>
</dbReference>
<dbReference type="PANTHER" id="PTHR10031:SF0">
    <property type="entry name" value="ATPASE PROTEIN 9"/>
    <property type="match status" value="1"/>
</dbReference>
<dbReference type="Pfam" id="PF00137">
    <property type="entry name" value="ATP-synt_C"/>
    <property type="match status" value="1"/>
</dbReference>
<dbReference type="PRINTS" id="PR00124">
    <property type="entry name" value="ATPASEC"/>
</dbReference>
<dbReference type="SUPFAM" id="SSF81333">
    <property type="entry name" value="F1F0 ATP synthase subunit C"/>
    <property type="match status" value="1"/>
</dbReference>
<dbReference type="PROSITE" id="PS00605">
    <property type="entry name" value="ATPASE_C"/>
    <property type="match status" value="1"/>
</dbReference>
<gene>
    <name evidence="1" type="primary">atpH</name>
</gene>
<comment type="function">
    <text evidence="1">F(1)F(0) ATP synthase produces ATP from ADP in the presence of a proton or sodium gradient. F-type ATPases consist of two structural domains, F(1) containing the extramembraneous catalytic core and F(0) containing the membrane proton channel, linked together by a central stalk and a peripheral stalk. During catalysis, ATP synthesis in the catalytic domain of F(1) is coupled via a rotary mechanism of the central stalk subunits to proton translocation.</text>
</comment>
<comment type="function">
    <text evidence="1">Key component of the F(0) channel; it plays a direct role in translocation across the membrane. A homomeric c-ring of between 10-14 subunits forms the central stalk rotor element with the F(1) delta and epsilon subunits.</text>
</comment>
<comment type="subunit">
    <text evidence="1">F-type ATPases have 2 components, F(1) - the catalytic core - and F(0) - the membrane proton channel. F(1) has five subunits: alpha(3), beta(3), gamma(1), delta(1), epsilon(1). F(0) has four main subunits: a(1), b(1), b'(1) and c(10-14). The alpha and beta chains form an alternating ring which encloses part of the gamma chain. F(1) is attached to F(0) by a central stalk formed by the gamma and epsilon chains, while a peripheral stalk is formed by the delta, b and b' chains.</text>
</comment>
<comment type="subcellular location">
    <subcellularLocation>
        <location evidence="1">Plastid</location>
        <location evidence="1">Chloroplast thylakoid membrane</location>
        <topology evidence="1">Multi-pass membrane protein</topology>
    </subcellularLocation>
</comment>
<comment type="miscellaneous">
    <text>In plastids the F-type ATPase is also known as CF(1)CF(0).</text>
</comment>
<comment type="similarity">
    <text evidence="1">Belongs to the ATPase C chain family.</text>
</comment>
<organism>
    <name type="scientific">Euglena gracilis</name>
    <dbReference type="NCBI Taxonomy" id="3039"/>
    <lineage>
        <taxon>Eukaryota</taxon>
        <taxon>Discoba</taxon>
        <taxon>Euglenozoa</taxon>
        <taxon>Euglenida</taxon>
        <taxon>Spirocuta</taxon>
        <taxon>Euglenophyceae</taxon>
        <taxon>Euglenales</taxon>
        <taxon>Euglenaceae</taxon>
        <taxon>Euglena</taxon>
    </lineage>
</organism>